<proteinExistence type="inferred from homology"/>
<gene>
    <name evidence="1" type="primary">hemA</name>
    <name type="ordered locus">BAA_4716</name>
</gene>
<protein>
    <recommendedName>
        <fullName evidence="1">Glutamyl-tRNA reductase</fullName>
        <shortName evidence="1">GluTR</shortName>
        <ecNumber evidence="1">1.2.1.70</ecNumber>
    </recommendedName>
</protein>
<comment type="function">
    <text evidence="1">Catalyzes the NADPH-dependent reduction of glutamyl-tRNA(Glu) to glutamate 1-semialdehyde (GSA).</text>
</comment>
<comment type="catalytic activity">
    <reaction evidence="1">
        <text>(S)-4-amino-5-oxopentanoate + tRNA(Glu) + NADP(+) = L-glutamyl-tRNA(Glu) + NADPH + H(+)</text>
        <dbReference type="Rhea" id="RHEA:12344"/>
        <dbReference type="Rhea" id="RHEA-COMP:9663"/>
        <dbReference type="Rhea" id="RHEA-COMP:9680"/>
        <dbReference type="ChEBI" id="CHEBI:15378"/>
        <dbReference type="ChEBI" id="CHEBI:57501"/>
        <dbReference type="ChEBI" id="CHEBI:57783"/>
        <dbReference type="ChEBI" id="CHEBI:58349"/>
        <dbReference type="ChEBI" id="CHEBI:78442"/>
        <dbReference type="ChEBI" id="CHEBI:78520"/>
        <dbReference type="EC" id="1.2.1.70"/>
    </reaction>
</comment>
<comment type="pathway">
    <text evidence="1">Porphyrin-containing compound metabolism; protoporphyrin-IX biosynthesis; 5-aminolevulinate from L-glutamyl-tRNA(Glu): step 1/2.</text>
</comment>
<comment type="subunit">
    <text evidence="1">Homodimer.</text>
</comment>
<comment type="domain">
    <text evidence="1">Possesses an unusual extended V-shaped dimeric structure with each monomer consisting of three distinct domains arranged along a curved 'spinal' alpha-helix. The N-terminal catalytic domain specifically recognizes the glutamate moiety of the substrate. The second domain is the NADPH-binding domain, and the third C-terminal domain is responsible for dimerization.</text>
</comment>
<comment type="miscellaneous">
    <text evidence="1">During catalysis, the active site Cys acts as a nucleophile attacking the alpha-carbonyl group of tRNA-bound glutamate with the formation of a thioester intermediate between enzyme and glutamate, and the concomitant release of tRNA(Glu). The thioester intermediate is finally reduced by direct hydride transfer from NADPH, to form the product GSA.</text>
</comment>
<comment type="similarity">
    <text evidence="1">Belongs to the glutamyl-tRNA reductase family.</text>
</comment>
<accession>C3P9F1</accession>
<keyword id="KW-0521">NADP</keyword>
<keyword id="KW-0560">Oxidoreductase</keyword>
<keyword id="KW-0627">Porphyrin biosynthesis</keyword>
<evidence type="ECO:0000255" key="1">
    <source>
        <dbReference type="HAMAP-Rule" id="MF_00087"/>
    </source>
</evidence>
<name>HEM1_BACAA</name>
<sequence length="444" mass="49825">MHILVVSVNYRTAPVEFREKLTFQAAELERAMTTLQNQKSVLENVIVSTCNRTEIYAVVDQLHTGRYYIKKFLADWFQLEIEEVAPYLTIFEQDGAIDHLFRVTCGLDSMVVGETQILGQIKDSFLEAQQVKATGTIFNELFKQVITLAKRAHSETTIGESAMSVSYAAVELGKKIFGELTDCHVLILGAGKMGELALQNLYGSGARKVTVMNRTLSKAEIMAEKYMGHAKPLSELQCALLEADILISSTGASDYVITKEMMTKVEKMRSGRPLFMVDIAVPRDIDPAIDELEGSFLYDIDDLQGVVEANRAERLKEAEKIQFMIEEEIVLFKTWLSTLGVVPLISALRDKALAIQSETMESLERKIPNLSDRERKVISKHTKSIINQLLKDPILVAKEIAAEEGADEKLALFAKIFDLEMEDVESRAEEVEHKRVWTPSVPSL</sequence>
<organism>
    <name type="scientific">Bacillus anthracis (strain A0248)</name>
    <dbReference type="NCBI Taxonomy" id="592021"/>
    <lineage>
        <taxon>Bacteria</taxon>
        <taxon>Bacillati</taxon>
        <taxon>Bacillota</taxon>
        <taxon>Bacilli</taxon>
        <taxon>Bacillales</taxon>
        <taxon>Bacillaceae</taxon>
        <taxon>Bacillus</taxon>
        <taxon>Bacillus cereus group</taxon>
    </lineage>
</organism>
<dbReference type="EC" id="1.2.1.70" evidence="1"/>
<dbReference type="EMBL" id="CP001598">
    <property type="protein sequence ID" value="ACQ50892.1"/>
    <property type="molecule type" value="Genomic_DNA"/>
</dbReference>
<dbReference type="RefSeq" id="WP_000547860.1">
    <property type="nucleotide sequence ID" value="NC_012659.1"/>
</dbReference>
<dbReference type="SMR" id="C3P9F1"/>
<dbReference type="GeneID" id="45024338"/>
<dbReference type="KEGG" id="bai:BAA_4716"/>
<dbReference type="HOGENOM" id="CLU_035113_2_2_9"/>
<dbReference type="UniPathway" id="UPA00251">
    <property type="reaction ID" value="UER00316"/>
</dbReference>
<dbReference type="GO" id="GO:0008883">
    <property type="term" value="F:glutamyl-tRNA reductase activity"/>
    <property type="evidence" value="ECO:0007669"/>
    <property type="project" value="UniProtKB-UniRule"/>
</dbReference>
<dbReference type="GO" id="GO:0050661">
    <property type="term" value="F:NADP binding"/>
    <property type="evidence" value="ECO:0007669"/>
    <property type="project" value="InterPro"/>
</dbReference>
<dbReference type="GO" id="GO:0006782">
    <property type="term" value="P:protoporphyrinogen IX biosynthetic process"/>
    <property type="evidence" value="ECO:0007669"/>
    <property type="project" value="UniProtKB-UniRule"/>
</dbReference>
<dbReference type="CDD" id="cd05213">
    <property type="entry name" value="NAD_bind_Glutamyl_tRNA_reduct"/>
    <property type="match status" value="1"/>
</dbReference>
<dbReference type="FunFam" id="3.30.460.30:FF:000001">
    <property type="entry name" value="Glutamyl-tRNA reductase"/>
    <property type="match status" value="1"/>
</dbReference>
<dbReference type="FunFam" id="3.40.50.720:FF:000031">
    <property type="entry name" value="Glutamyl-tRNA reductase"/>
    <property type="match status" value="1"/>
</dbReference>
<dbReference type="Gene3D" id="3.30.460.30">
    <property type="entry name" value="Glutamyl-tRNA reductase, N-terminal domain"/>
    <property type="match status" value="1"/>
</dbReference>
<dbReference type="Gene3D" id="3.40.50.720">
    <property type="entry name" value="NAD(P)-binding Rossmann-like Domain"/>
    <property type="match status" value="1"/>
</dbReference>
<dbReference type="HAMAP" id="MF_00087">
    <property type="entry name" value="Glu_tRNA_reductase"/>
    <property type="match status" value="1"/>
</dbReference>
<dbReference type="InterPro" id="IPR000343">
    <property type="entry name" value="4pyrrol_synth_GluRdtase"/>
</dbReference>
<dbReference type="InterPro" id="IPR015896">
    <property type="entry name" value="4pyrrol_synth_GluRdtase_dimer"/>
</dbReference>
<dbReference type="InterPro" id="IPR015895">
    <property type="entry name" value="4pyrrol_synth_GluRdtase_N"/>
</dbReference>
<dbReference type="InterPro" id="IPR018214">
    <property type="entry name" value="GluRdtase_CS"/>
</dbReference>
<dbReference type="InterPro" id="IPR036453">
    <property type="entry name" value="GluRdtase_dimer_dom_sf"/>
</dbReference>
<dbReference type="InterPro" id="IPR036343">
    <property type="entry name" value="GluRdtase_N_sf"/>
</dbReference>
<dbReference type="InterPro" id="IPR036291">
    <property type="entry name" value="NAD(P)-bd_dom_sf"/>
</dbReference>
<dbReference type="InterPro" id="IPR006151">
    <property type="entry name" value="Shikm_DH/Glu-tRNA_Rdtase"/>
</dbReference>
<dbReference type="NCBIfam" id="TIGR01035">
    <property type="entry name" value="hemA"/>
    <property type="match status" value="1"/>
</dbReference>
<dbReference type="PANTHER" id="PTHR43120">
    <property type="entry name" value="GLUTAMYL-TRNA REDUCTASE 1, CHLOROPLASTIC"/>
    <property type="match status" value="1"/>
</dbReference>
<dbReference type="PANTHER" id="PTHR43120:SF1">
    <property type="entry name" value="GLUTAMYL-TRNA REDUCTASE 1, CHLOROPLASTIC"/>
    <property type="match status" value="1"/>
</dbReference>
<dbReference type="Pfam" id="PF00745">
    <property type="entry name" value="GlutR_dimer"/>
    <property type="match status" value="1"/>
</dbReference>
<dbReference type="Pfam" id="PF05201">
    <property type="entry name" value="GlutR_N"/>
    <property type="match status" value="1"/>
</dbReference>
<dbReference type="Pfam" id="PF01488">
    <property type="entry name" value="Shikimate_DH"/>
    <property type="match status" value="1"/>
</dbReference>
<dbReference type="PIRSF" id="PIRSF000445">
    <property type="entry name" value="4pyrrol_synth_GluRdtase"/>
    <property type="match status" value="1"/>
</dbReference>
<dbReference type="SUPFAM" id="SSF69742">
    <property type="entry name" value="Glutamyl tRNA-reductase catalytic, N-terminal domain"/>
    <property type="match status" value="1"/>
</dbReference>
<dbReference type="SUPFAM" id="SSF69075">
    <property type="entry name" value="Glutamyl tRNA-reductase dimerization domain"/>
    <property type="match status" value="1"/>
</dbReference>
<dbReference type="SUPFAM" id="SSF51735">
    <property type="entry name" value="NAD(P)-binding Rossmann-fold domains"/>
    <property type="match status" value="1"/>
</dbReference>
<dbReference type="PROSITE" id="PS00747">
    <property type="entry name" value="GLUTR"/>
    <property type="match status" value="1"/>
</dbReference>
<feature type="chain" id="PRO_1000190501" description="Glutamyl-tRNA reductase">
    <location>
        <begin position="1"/>
        <end position="444"/>
    </location>
</feature>
<feature type="active site" description="Nucleophile" evidence="1">
    <location>
        <position position="50"/>
    </location>
</feature>
<feature type="binding site" evidence="1">
    <location>
        <begin position="49"/>
        <end position="52"/>
    </location>
    <ligand>
        <name>substrate</name>
    </ligand>
</feature>
<feature type="binding site" evidence="1">
    <location>
        <position position="109"/>
    </location>
    <ligand>
        <name>substrate</name>
    </ligand>
</feature>
<feature type="binding site" evidence="1">
    <location>
        <begin position="114"/>
        <end position="116"/>
    </location>
    <ligand>
        <name>substrate</name>
    </ligand>
</feature>
<feature type="binding site" evidence="1">
    <location>
        <position position="120"/>
    </location>
    <ligand>
        <name>substrate</name>
    </ligand>
</feature>
<feature type="binding site" evidence="1">
    <location>
        <begin position="189"/>
        <end position="194"/>
    </location>
    <ligand>
        <name>NADP(+)</name>
        <dbReference type="ChEBI" id="CHEBI:58349"/>
    </ligand>
</feature>
<feature type="site" description="Important for activity" evidence="1">
    <location>
        <position position="99"/>
    </location>
</feature>
<reference key="1">
    <citation type="submission" date="2009-04" db="EMBL/GenBank/DDBJ databases">
        <title>Genome sequence of Bacillus anthracis A0248.</title>
        <authorList>
            <person name="Dodson R.J."/>
            <person name="Munk A.C."/>
            <person name="Bruce D."/>
            <person name="Detter C."/>
            <person name="Tapia R."/>
            <person name="Sutton G."/>
            <person name="Sims D."/>
            <person name="Brettin T."/>
        </authorList>
    </citation>
    <scope>NUCLEOTIDE SEQUENCE [LARGE SCALE GENOMIC DNA]</scope>
    <source>
        <strain>A0248</strain>
    </source>
</reference>